<keyword id="KW-0170">Cobalt</keyword>
<keyword id="KW-0479">Metal-binding</keyword>
<keyword id="KW-0484">Methanogenesis</keyword>
<keyword id="KW-0677">Repeat</keyword>
<protein>
    <recommendedName>
        <fullName>Trimethylamine corrinoid protein 2</fullName>
        <shortName>TCP 2</shortName>
    </recommendedName>
</protein>
<comment type="function">
    <text evidence="1">Acts probably as a methyl group carrier between MttB and either MtbA or MtaA.</text>
</comment>
<comment type="pathway">
    <text>One-carbon metabolism; methanogenesis from trimethylamine.</text>
</comment>
<comment type="subunit">
    <text evidence="1">Can form a complex with MttB.</text>
</comment>
<comment type="similarity">
    <text evidence="4">Belongs to the methylamine corrinoid protein family.</text>
</comment>
<dbReference type="EMBL" id="AE008384">
    <property type="protein sequence ID" value="AAM31743.1"/>
    <property type="molecule type" value="Genomic_DNA"/>
</dbReference>
<dbReference type="RefSeq" id="WP_011033979.1">
    <property type="nucleotide sequence ID" value="NC_003901.1"/>
</dbReference>
<dbReference type="SMR" id="P58983"/>
<dbReference type="KEGG" id="mma:MM_2047"/>
<dbReference type="PATRIC" id="fig|192952.21.peg.2349"/>
<dbReference type="eggNOG" id="arCOG02028">
    <property type="taxonomic scope" value="Archaea"/>
</dbReference>
<dbReference type="HOGENOM" id="CLU_082102_1_0_2"/>
<dbReference type="UniPathway" id="UPA00645"/>
<dbReference type="Proteomes" id="UP000000595">
    <property type="component" value="Chromosome"/>
</dbReference>
<dbReference type="GO" id="GO:0005829">
    <property type="term" value="C:cytosol"/>
    <property type="evidence" value="ECO:0007669"/>
    <property type="project" value="TreeGrafter"/>
</dbReference>
<dbReference type="GO" id="GO:0031419">
    <property type="term" value="F:cobalamin binding"/>
    <property type="evidence" value="ECO:0007669"/>
    <property type="project" value="InterPro"/>
</dbReference>
<dbReference type="GO" id="GO:0050897">
    <property type="term" value="F:cobalt ion binding"/>
    <property type="evidence" value="ECO:0007669"/>
    <property type="project" value="InterPro"/>
</dbReference>
<dbReference type="GO" id="GO:0008705">
    <property type="term" value="F:methionine synthase activity"/>
    <property type="evidence" value="ECO:0007669"/>
    <property type="project" value="TreeGrafter"/>
</dbReference>
<dbReference type="GO" id="GO:0050667">
    <property type="term" value="P:homocysteine metabolic process"/>
    <property type="evidence" value="ECO:0007669"/>
    <property type="project" value="TreeGrafter"/>
</dbReference>
<dbReference type="GO" id="GO:0015948">
    <property type="term" value="P:methanogenesis"/>
    <property type="evidence" value="ECO:0007669"/>
    <property type="project" value="UniProtKB-KW"/>
</dbReference>
<dbReference type="GO" id="GO:0046653">
    <property type="term" value="P:tetrahydrofolate metabolic process"/>
    <property type="evidence" value="ECO:0007669"/>
    <property type="project" value="TreeGrafter"/>
</dbReference>
<dbReference type="CDD" id="cd02070">
    <property type="entry name" value="corrinoid_protein_B12-BD"/>
    <property type="match status" value="1"/>
</dbReference>
<dbReference type="FunFam" id="3.40.50.280:FF:000003">
    <property type="entry name" value="Dimethylamine methyltransferase corrinoid protein"/>
    <property type="match status" value="1"/>
</dbReference>
<dbReference type="FunFam" id="1.10.1240.10:FF:000004">
    <property type="entry name" value="Monomethylamine methyltransferase corrinoid protein"/>
    <property type="match status" value="1"/>
</dbReference>
<dbReference type="Gene3D" id="3.40.50.280">
    <property type="entry name" value="Cobalamin-binding domain"/>
    <property type="match status" value="1"/>
</dbReference>
<dbReference type="Gene3D" id="1.10.1240.10">
    <property type="entry name" value="Methionine synthase domain"/>
    <property type="match status" value="1"/>
</dbReference>
<dbReference type="InterPro" id="IPR003759">
    <property type="entry name" value="Cbl-bd_cap"/>
</dbReference>
<dbReference type="InterPro" id="IPR006158">
    <property type="entry name" value="Cobalamin-bd"/>
</dbReference>
<dbReference type="InterPro" id="IPR036724">
    <property type="entry name" value="Cobalamin-bd_sf"/>
</dbReference>
<dbReference type="InterPro" id="IPR012741">
    <property type="entry name" value="Corrinoid_p"/>
</dbReference>
<dbReference type="InterPro" id="IPR050554">
    <property type="entry name" value="Met_Synthase/Corrinoid"/>
</dbReference>
<dbReference type="InterPro" id="IPR036594">
    <property type="entry name" value="Meth_synthase_dom"/>
</dbReference>
<dbReference type="NCBIfam" id="TIGR02370">
    <property type="entry name" value="pyl_corrinoid"/>
    <property type="match status" value="1"/>
</dbReference>
<dbReference type="PANTHER" id="PTHR45833">
    <property type="entry name" value="METHIONINE SYNTHASE"/>
    <property type="match status" value="1"/>
</dbReference>
<dbReference type="PANTHER" id="PTHR45833:SF1">
    <property type="entry name" value="METHIONINE SYNTHASE"/>
    <property type="match status" value="1"/>
</dbReference>
<dbReference type="Pfam" id="PF02310">
    <property type="entry name" value="B12-binding"/>
    <property type="match status" value="1"/>
</dbReference>
<dbReference type="Pfam" id="PF02607">
    <property type="entry name" value="B12-binding_2"/>
    <property type="match status" value="1"/>
</dbReference>
<dbReference type="SMART" id="SM01018">
    <property type="entry name" value="B12-binding_2"/>
    <property type="match status" value="1"/>
</dbReference>
<dbReference type="SUPFAM" id="SSF52242">
    <property type="entry name" value="Cobalamin (vitamin B12)-binding domain"/>
    <property type="match status" value="1"/>
</dbReference>
<dbReference type="SUPFAM" id="SSF47644">
    <property type="entry name" value="Methionine synthase domain"/>
    <property type="match status" value="1"/>
</dbReference>
<dbReference type="PROSITE" id="PS51332">
    <property type="entry name" value="B12_BINDING"/>
    <property type="match status" value="1"/>
</dbReference>
<dbReference type="PROSITE" id="PS51337">
    <property type="entry name" value="B12_BINDING_NTER"/>
    <property type="match status" value="1"/>
</dbReference>
<feature type="chain" id="PRO_0000216485" description="Trimethylamine corrinoid protein 2">
    <location>
        <begin position="1"/>
        <end position="218"/>
    </location>
</feature>
<feature type="domain" description="B12-binding N-terminal" evidence="3">
    <location>
        <begin position="1"/>
        <end position="92"/>
    </location>
</feature>
<feature type="domain" description="B12-binding" evidence="2">
    <location>
        <begin position="94"/>
        <end position="218"/>
    </location>
</feature>
<feature type="binding site" description="axial binding residue" evidence="1">
    <location>
        <position position="107"/>
    </location>
    <ligand>
        <name>methylcob(III)alamin</name>
        <dbReference type="ChEBI" id="CHEBI:28115"/>
    </ligand>
    <ligandPart>
        <name>Co</name>
        <dbReference type="ChEBI" id="CHEBI:27638"/>
    </ligandPart>
</feature>
<evidence type="ECO:0000250" key="1"/>
<evidence type="ECO:0000255" key="2">
    <source>
        <dbReference type="PROSITE-ProRule" id="PRU00666"/>
    </source>
</evidence>
<evidence type="ECO:0000255" key="3">
    <source>
        <dbReference type="PROSITE-ProRule" id="PRU00667"/>
    </source>
</evidence>
<evidence type="ECO:0000305" key="4"/>
<gene>
    <name type="primary">mttC2</name>
    <name type="ordered locus">MM_2047</name>
</gene>
<accession>P58983</accession>
<name>MTTC2_METMA</name>
<organism>
    <name type="scientific">Methanosarcina mazei (strain ATCC BAA-159 / DSM 3647 / Goe1 / Go1 / JCM 11833 / OCM 88)</name>
    <name type="common">Methanosarcina frisia</name>
    <dbReference type="NCBI Taxonomy" id="192952"/>
    <lineage>
        <taxon>Archaea</taxon>
        <taxon>Methanobacteriati</taxon>
        <taxon>Methanobacteriota</taxon>
        <taxon>Stenosarchaea group</taxon>
        <taxon>Methanomicrobia</taxon>
        <taxon>Methanosarcinales</taxon>
        <taxon>Methanosarcinaceae</taxon>
        <taxon>Methanosarcina</taxon>
    </lineage>
</organism>
<sequence>MAGKEEIIAKAKNSITEFDEELAAEVAEEALAAGVDPVELIEKGFTAGMEEVGEQFGQGALFLPHVLAAAEAMKAGIEVITPEMEKRKSQTKNLGTVIIGTIEGDIHSIGKDIVASMLNIAGFKVVDLGRDVAIKTFVEKVKELKPQVVASSALMTTTMVNQIQIEEQLKEAGVRDQVKTMVGGAPVTQDWADKIGADIYGESANDAVAKVKAALKVG</sequence>
<reference key="1">
    <citation type="journal article" date="2002" name="J. Mol. Microbiol. Biotechnol.">
        <title>The genome of Methanosarcina mazei: evidence for lateral gene transfer between Bacteria and Archaea.</title>
        <authorList>
            <person name="Deppenmeier U."/>
            <person name="Johann A."/>
            <person name="Hartsch T."/>
            <person name="Merkl R."/>
            <person name="Schmitz R.A."/>
            <person name="Martinez-Arias R."/>
            <person name="Henne A."/>
            <person name="Wiezer A."/>
            <person name="Baeumer S."/>
            <person name="Jacobi C."/>
            <person name="Brueggemann H."/>
            <person name="Lienard T."/>
            <person name="Christmann A."/>
            <person name="Boemecke M."/>
            <person name="Steckel S."/>
            <person name="Bhattacharyya A."/>
            <person name="Lykidis A."/>
            <person name="Overbeek R."/>
            <person name="Klenk H.-P."/>
            <person name="Gunsalus R.P."/>
            <person name="Fritz H.-J."/>
            <person name="Gottschalk G."/>
        </authorList>
    </citation>
    <scope>NUCLEOTIDE SEQUENCE [LARGE SCALE GENOMIC DNA]</scope>
    <source>
        <strain>ATCC BAA-159 / DSM 3647 / Goe1 / Go1 / JCM 11833 / OCM 88</strain>
    </source>
</reference>
<proteinExistence type="inferred from homology"/>